<keyword id="KW-1185">Reference proteome</keyword>
<keyword id="KW-0687">Ribonucleoprotein</keyword>
<keyword id="KW-0689">Ribosomal protein</keyword>
<keyword id="KW-0694">RNA-binding</keyword>
<keyword id="KW-0699">rRNA-binding</keyword>
<keyword id="KW-0820">tRNA-binding</keyword>
<name>RS7_SALTY</name>
<organism>
    <name type="scientific">Salmonella typhimurium (strain LT2 / SGSC1412 / ATCC 700720)</name>
    <dbReference type="NCBI Taxonomy" id="99287"/>
    <lineage>
        <taxon>Bacteria</taxon>
        <taxon>Pseudomonadati</taxon>
        <taxon>Pseudomonadota</taxon>
        <taxon>Gammaproteobacteria</taxon>
        <taxon>Enterobacterales</taxon>
        <taxon>Enterobacteriaceae</taxon>
        <taxon>Salmonella</taxon>
    </lineage>
</organism>
<accession>P0A2B3</accession>
<accession>P26230</accession>
<proteinExistence type="evidence at protein level"/>
<protein>
    <recommendedName>
        <fullName evidence="2">Small ribosomal subunit protein uS7</fullName>
    </recommendedName>
    <alternativeName>
        <fullName evidence="3">30S ribosomal protein S7</fullName>
    </alternativeName>
</protein>
<gene>
    <name evidence="2" type="primary">rpsG</name>
    <name type="ordered locus">STM3447</name>
</gene>
<comment type="function">
    <text evidence="2">One of the primary rRNA binding proteins, it binds directly to 16S rRNA where it nucleates assembly of the head domain of the 30S subunit. Is located at the subunit interface close to the decoding center, probably blocks exit of the E-site tRNA.</text>
</comment>
<comment type="subunit">
    <text evidence="2">Part of the 30S ribosomal subunit. Contacts proteins S9 and S11 (By similarity). Binds EngA (AC Q9XCI8).</text>
</comment>
<comment type="similarity">
    <text evidence="2">Belongs to the universal ribosomal protein uS7 family.</text>
</comment>
<reference key="1">
    <citation type="journal article" date="1992" name="Gene">
        <title>Comparison of the complete sequence of the str operon in Salmonella typhimurium and Escherichia coli.</title>
        <authorList>
            <person name="Johanson U."/>
            <person name="Hughes D."/>
        </authorList>
    </citation>
    <scope>NUCLEOTIDE SEQUENCE [GENOMIC DNA]</scope>
    <source>
        <strain>LT2</strain>
    </source>
</reference>
<reference key="2">
    <citation type="journal article" date="2001" name="Nature">
        <title>Complete genome sequence of Salmonella enterica serovar Typhimurium LT2.</title>
        <authorList>
            <person name="McClelland M."/>
            <person name="Sanderson K.E."/>
            <person name="Spieth J."/>
            <person name="Clifton S.W."/>
            <person name="Latreille P."/>
            <person name="Courtney L."/>
            <person name="Porwollik S."/>
            <person name="Ali J."/>
            <person name="Dante M."/>
            <person name="Du F."/>
            <person name="Hou S."/>
            <person name="Layman D."/>
            <person name="Leonard S."/>
            <person name="Nguyen C."/>
            <person name="Scott K."/>
            <person name="Holmes A."/>
            <person name="Grewal N."/>
            <person name="Mulvaney E."/>
            <person name="Ryan E."/>
            <person name="Sun H."/>
            <person name="Florea L."/>
            <person name="Miller W."/>
            <person name="Stoneking T."/>
            <person name="Nhan M."/>
            <person name="Waterston R."/>
            <person name="Wilson R.K."/>
        </authorList>
    </citation>
    <scope>NUCLEOTIDE SEQUENCE [LARGE SCALE GENOMIC DNA]</scope>
    <source>
        <strain>LT2 / SGSC1412 / ATCC 700720</strain>
    </source>
</reference>
<reference key="3">
    <citation type="journal article" date="2007" name="Protein Sci.">
        <title>Functional analysis of the GTPases EngA and YhbZ encoded by Salmonella typhimurium.</title>
        <authorList>
            <person name="Lamb H.K."/>
            <person name="Thompson P."/>
            <person name="Elliott C."/>
            <person name="Charles I.G."/>
            <person name="Richards J."/>
            <person name="Lockyer M."/>
            <person name="Watkins N."/>
            <person name="Nichols C."/>
            <person name="Stammers D.K."/>
            <person name="Bagshaw C.R."/>
            <person name="Cooper A."/>
            <person name="Hawkins A.R."/>
        </authorList>
    </citation>
    <scope>IDENTIFICATION BY MASS SPECTROMETRY</scope>
    <scope>INTERACTION WITH ENGA</scope>
    <source>
        <strain>FIRN / SL3261</strain>
    </source>
</reference>
<feature type="initiator methionine" description="Removed" evidence="1">
    <location>
        <position position="1"/>
    </location>
</feature>
<feature type="chain" id="PRO_0000124336" description="Small ribosomal subunit protein uS7">
    <location>
        <begin position="2"/>
        <end position="156"/>
    </location>
</feature>
<dbReference type="EMBL" id="X64591">
    <property type="protein sequence ID" value="CAA45879.1"/>
    <property type="molecule type" value="Genomic_DNA"/>
</dbReference>
<dbReference type="EMBL" id="AE006468">
    <property type="protein sequence ID" value="AAL22310.1"/>
    <property type="molecule type" value="Genomic_DNA"/>
</dbReference>
<dbReference type="PIR" id="JC1423">
    <property type="entry name" value="JC1423"/>
</dbReference>
<dbReference type="RefSeq" id="NP_462351.1">
    <property type="nucleotide sequence ID" value="NC_003197.2"/>
</dbReference>
<dbReference type="RefSeq" id="WP_001138042.1">
    <property type="nucleotide sequence ID" value="NC_003197.2"/>
</dbReference>
<dbReference type="SMR" id="P0A2B3"/>
<dbReference type="STRING" id="99287.STM3447"/>
<dbReference type="PaxDb" id="99287-STM3447"/>
<dbReference type="GeneID" id="1254970"/>
<dbReference type="GeneID" id="92804583"/>
<dbReference type="KEGG" id="stm:STM3447"/>
<dbReference type="PATRIC" id="fig|99287.12.peg.3644"/>
<dbReference type="HOGENOM" id="CLU_072226_1_1_6"/>
<dbReference type="OMA" id="DDTHRMA"/>
<dbReference type="PhylomeDB" id="P0A2B3"/>
<dbReference type="BioCyc" id="SENT99287:STM3447-MONOMER"/>
<dbReference type="PRO" id="PR:P0A2B3"/>
<dbReference type="Proteomes" id="UP000001014">
    <property type="component" value="Chromosome"/>
</dbReference>
<dbReference type="GO" id="GO:0022627">
    <property type="term" value="C:cytosolic small ribosomal subunit"/>
    <property type="evidence" value="ECO:0000318"/>
    <property type="project" value="GO_Central"/>
</dbReference>
<dbReference type="GO" id="GO:0005840">
    <property type="term" value="C:ribosome"/>
    <property type="evidence" value="ECO:0000318"/>
    <property type="project" value="GO_Central"/>
</dbReference>
<dbReference type="GO" id="GO:0003729">
    <property type="term" value="F:mRNA binding"/>
    <property type="evidence" value="ECO:0000318"/>
    <property type="project" value="GO_Central"/>
</dbReference>
<dbReference type="GO" id="GO:0019843">
    <property type="term" value="F:rRNA binding"/>
    <property type="evidence" value="ECO:0000318"/>
    <property type="project" value="GO_Central"/>
</dbReference>
<dbReference type="GO" id="GO:0003735">
    <property type="term" value="F:structural constituent of ribosome"/>
    <property type="evidence" value="ECO:0000318"/>
    <property type="project" value="GO_Central"/>
</dbReference>
<dbReference type="GO" id="GO:0000049">
    <property type="term" value="F:tRNA binding"/>
    <property type="evidence" value="ECO:0007669"/>
    <property type="project" value="UniProtKB-UniRule"/>
</dbReference>
<dbReference type="GO" id="GO:0000028">
    <property type="term" value="P:ribosomal small subunit assembly"/>
    <property type="evidence" value="ECO:0000318"/>
    <property type="project" value="GO_Central"/>
</dbReference>
<dbReference type="GO" id="GO:0006412">
    <property type="term" value="P:translation"/>
    <property type="evidence" value="ECO:0000318"/>
    <property type="project" value="GO_Central"/>
</dbReference>
<dbReference type="CDD" id="cd14869">
    <property type="entry name" value="uS7_Bacteria"/>
    <property type="match status" value="1"/>
</dbReference>
<dbReference type="FunFam" id="1.10.455.10:FF:000001">
    <property type="entry name" value="30S ribosomal protein S7"/>
    <property type="match status" value="1"/>
</dbReference>
<dbReference type="Gene3D" id="1.10.455.10">
    <property type="entry name" value="Ribosomal protein S7 domain"/>
    <property type="match status" value="1"/>
</dbReference>
<dbReference type="HAMAP" id="MF_00480_B">
    <property type="entry name" value="Ribosomal_uS7_B"/>
    <property type="match status" value="1"/>
</dbReference>
<dbReference type="InterPro" id="IPR000235">
    <property type="entry name" value="Ribosomal_uS7"/>
</dbReference>
<dbReference type="InterPro" id="IPR005717">
    <property type="entry name" value="Ribosomal_uS7_bac/org-type"/>
</dbReference>
<dbReference type="InterPro" id="IPR020606">
    <property type="entry name" value="Ribosomal_uS7_CS"/>
</dbReference>
<dbReference type="InterPro" id="IPR023798">
    <property type="entry name" value="Ribosomal_uS7_dom"/>
</dbReference>
<dbReference type="InterPro" id="IPR036823">
    <property type="entry name" value="Ribosomal_uS7_dom_sf"/>
</dbReference>
<dbReference type="NCBIfam" id="TIGR01029">
    <property type="entry name" value="rpsG_bact"/>
    <property type="match status" value="1"/>
</dbReference>
<dbReference type="PANTHER" id="PTHR11205">
    <property type="entry name" value="RIBOSOMAL PROTEIN S7"/>
    <property type="match status" value="1"/>
</dbReference>
<dbReference type="Pfam" id="PF00177">
    <property type="entry name" value="Ribosomal_S7"/>
    <property type="match status" value="1"/>
</dbReference>
<dbReference type="PIRSF" id="PIRSF002122">
    <property type="entry name" value="RPS7p_RPS7a_RPS5e_RPS7o"/>
    <property type="match status" value="1"/>
</dbReference>
<dbReference type="SUPFAM" id="SSF47973">
    <property type="entry name" value="Ribosomal protein S7"/>
    <property type="match status" value="1"/>
</dbReference>
<dbReference type="PROSITE" id="PS00052">
    <property type="entry name" value="RIBOSOMAL_S7"/>
    <property type="match status" value="1"/>
</dbReference>
<sequence>MPRRRVIGQRKILPDPKFGSELLAKFVNILMVDGKKSTAESIVYSALETLAQRSGKSELEAFEVALENVRPTVEVKSRRVGGSTYQVPVEVRPVRRNALAMRWIVEAARKRGDKSMALRLANELSDAADNKGTAVKKREDVHRMAEANKAFAHYRW</sequence>
<evidence type="ECO:0000250" key="1"/>
<evidence type="ECO:0000255" key="2">
    <source>
        <dbReference type="HAMAP-Rule" id="MF_00480"/>
    </source>
</evidence>
<evidence type="ECO:0000305" key="3"/>